<evidence type="ECO:0000250" key="1"/>
<evidence type="ECO:0000255" key="2">
    <source>
        <dbReference type="PROSITE-ProRule" id="PRU00713"/>
    </source>
</evidence>
<evidence type="ECO:0000256" key="3">
    <source>
        <dbReference type="SAM" id="MobiDB-lite"/>
    </source>
</evidence>
<evidence type="ECO:0000269" key="4">
    <source>
    </source>
</evidence>
<evidence type="ECO:0000269" key="5">
    <source>
    </source>
</evidence>
<evidence type="ECO:0000269" key="6">
    <source>
    </source>
</evidence>
<evidence type="ECO:0000269" key="7">
    <source>
    </source>
</evidence>
<evidence type="ECO:0000303" key="8">
    <source>
    </source>
</evidence>
<evidence type="ECO:0000305" key="9"/>
<feature type="chain" id="PRO_0000307667" description="B9 domain-containing protein 1">
    <location>
        <begin position="1"/>
        <end position="204"/>
    </location>
</feature>
<feature type="domain" description="C2 B9-type" evidence="2">
    <location>
        <begin position="9"/>
        <end position="127"/>
    </location>
</feature>
<feature type="region of interest" description="Disordered" evidence="3">
    <location>
        <begin position="182"/>
        <end position="204"/>
    </location>
</feature>
<feature type="splice variant" id="VSP_028770" description="In isoform 2." evidence="8">
    <original>WFMGRRPEYTDPKVVAQGEGREVTRVRSQGFVTLLFNVVTKDMRKLGYDTGPSDTQGVLGPSPPQSFPQ</original>
    <variation>LCLVASSDLQAAPPTEDK</variation>
    <location>
        <begin position="136"/>
        <end position="204"/>
    </location>
</feature>
<feature type="sequence variant" id="VAR_076974" description="In JBTS27; dbSNP:rs771170000." evidence="6">
    <original>Y</original>
    <variation>C</variation>
    <location>
        <position position="32"/>
    </location>
</feature>
<feature type="sequence variant" id="VAR_075700" description="In dbSNP:rs546359789." evidence="7">
    <original>S</original>
    <variation>P</variation>
    <location>
        <position position="51"/>
    </location>
</feature>
<feature type="sequence variant" id="VAR_066995" description="In dbSNP:rs73980038." evidence="5">
    <original>R</original>
    <variation>W</variation>
    <location>
        <position position="61"/>
    </location>
</feature>
<feature type="sequence variant" id="VAR_076975" description="In JBTS27; dbSNP:rs886038205." evidence="6">
    <original>R</original>
    <variation>Q</variation>
    <location>
        <position position="156"/>
    </location>
</feature>
<feature type="sequence variant" id="VAR_076976" description="In JBTS27; dbSNP:rs886038206." evidence="6">
    <location>
        <position position="174"/>
    </location>
</feature>
<name>B9D1_HUMAN</name>
<protein>
    <recommendedName>
        <fullName>B9 domain-containing protein 1</fullName>
    </recommendedName>
    <alternativeName>
        <fullName>MKS1-related protein 1</fullName>
    </alternativeName>
</protein>
<dbReference type="EMBL" id="AB030506">
    <property type="protein sequence ID" value="BAA82655.1"/>
    <property type="molecule type" value="mRNA"/>
</dbReference>
<dbReference type="EMBL" id="BC002944">
    <property type="protein sequence ID" value="AAH02944.1"/>
    <property type="molecule type" value="mRNA"/>
</dbReference>
<dbReference type="CCDS" id="CCDS11205.1">
    <molecule id="Q9UPM9-1"/>
</dbReference>
<dbReference type="CCDS" id="CCDS82089.1">
    <molecule id="Q9UPM9-2"/>
</dbReference>
<dbReference type="RefSeq" id="NP_001308145.1">
    <molecule id="Q9UPM9-2"/>
    <property type="nucleotide sequence ID" value="NM_001321216.2"/>
</dbReference>
<dbReference type="RefSeq" id="NP_001308147.1">
    <property type="nucleotide sequence ID" value="NM_001321218.1"/>
</dbReference>
<dbReference type="RefSeq" id="NP_001308148.1">
    <property type="nucleotide sequence ID" value="NM_001321219.1"/>
</dbReference>
<dbReference type="RefSeq" id="NP_056496.1">
    <molecule id="Q9UPM9-1"/>
    <property type="nucleotide sequence ID" value="NM_015681.6"/>
</dbReference>
<dbReference type="RefSeq" id="XP_016879941.1">
    <property type="nucleotide sequence ID" value="XM_017024452.1"/>
</dbReference>
<dbReference type="RefSeq" id="XP_047291707.1">
    <molecule id="Q9UPM9-1"/>
    <property type="nucleotide sequence ID" value="XM_047435751.1"/>
</dbReference>
<dbReference type="RefSeq" id="XP_047291711.1">
    <molecule id="Q9UPM9-2"/>
    <property type="nucleotide sequence ID" value="XM_047435755.1"/>
</dbReference>
<dbReference type="RefSeq" id="XP_054171695.1">
    <molecule id="Q9UPM9-1"/>
    <property type="nucleotide sequence ID" value="XM_054315720.1"/>
</dbReference>
<dbReference type="RefSeq" id="XP_054171699.1">
    <molecule id="Q9UPM9-2"/>
    <property type="nucleotide sequence ID" value="XM_054315724.1"/>
</dbReference>
<dbReference type="BioGRID" id="117986">
    <property type="interactions" value="37"/>
</dbReference>
<dbReference type="ComplexPortal" id="CPX-2531">
    <property type="entry name" value="MKS transition zone complex"/>
</dbReference>
<dbReference type="CORUM" id="Q9UPM9"/>
<dbReference type="FunCoup" id="Q9UPM9">
    <property type="interactions" value="360"/>
</dbReference>
<dbReference type="IntAct" id="Q9UPM9">
    <property type="interactions" value="25"/>
</dbReference>
<dbReference type="STRING" id="9606.ENSP00000261499"/>
<dbReference type="iPTMnet" id="Q9UPM9"/>
<dbReference type="PhosphoSitePlus" id="Q9UPM9"/>
<dbReference type="BioMuta" id="B9D1"/>
<dbReference type="DMDM" id="74725691"/>
<dbReference type="jPOST" id="Q9UPM9"/>
<dbReference type="MassIVE" id="Q9UPM9"/>
<dbReference type="PaxDb" id="9606-ENSP00000261499"/>
<dbReference type="PeptideAtlas" id="Q9UPM9"/>
<dbReference type="ProteomicsDB" id="85380">
    <molecule id="Q9UPM9-1"/>
</dbReference>
<dbReference type="ProteomicsDB" id="85381">
    <molecule id="Q9UPM9-2"/>
</dbReference>
<dbReference type="Pumba" id="Q9UPM9"/>
<dbReference type="Antibodypedia" id="13647">
    <property type="antibodies" value="79 antibodies from 22 providers"/>
</dbReference>
<dbReference type="DNASU" id="27077"/>
<dbReference type="Ensembl" id="ENST00000261499.11">
    <molecule id="Q9UPM9-1"/>
    <property type="protein sequence ID" value="ENSP00000261499.4"/>
    <property type="gene ID" value="ENSG00000108641.20"/>
</dbReference>
<dbReference type="Ensembl" id="ENST00000268841.10">
    <molecule id="Q9UPM9-2"/>
    <property type="protein sequence ID" value="ENSP00000268841.6"/>
    <property type="gene ID" value="ENSG00000108641.20"/>
</dbReference>
<dbReference type="GeneID" id="27077"/>
<dbReference type="KEGG" id="hsa:27077"/>
<dbReference type="MANE-Select" id="ENST00000261499.11">
    <property type="protein sequence ID" value="ENSP00000261499.4"/>
    <property type="RefSeq nucleotide sequence ID" value="NM_015681.6"/>
    <property type="RefSeq protein sequence ID" value="NP_056496.1"/>
</dbReference>
<dbReference type="UCSC" id="uc002gvk.5">
    <molecule id="Q9UPM9-1"/>
    <property type="organism name" value="human"/>
</dbReference>
<dbReference type="AGR" id="HGNC:24123"/>
<dbReference type="CTD" id="27077"/>
<dbReference type="DisGeNET" id="27077"/>
<dbReference type="GeneCards" id="B9D1"/>
<dbReference type="GeneReviews" id="B9D1"/>
<dbReference type="HGNC" id="HGNC:24123">
    <property type="gene designation" value="B9D1"/>
</dbReference>
<dbReference type="HPA" id="ENSG00000108641">
    <property type="expression patterns" value="Tissue enhanced (choroid)"/>
</dbReference>
<dbReference type="MalaCards" id="B9D1"/>
<dbReference type="MIM" id="614144">
    <property type="type" value="gene"/>
</dbReference>
<dbReference type="MIM" id="614209">
    <property type="type" value="phenotype"/>
</dbReference>
<dbReference type="MIM" id="617120">
    <property type="type" value="phenotype"/>
</dbReference>
<dbReference type="neXtProt" id="NX_Q9UPM9"/>
<dbReference type="OpenTargets" id="ENSG00000108641"/>
<dbReference type="Orphanet" id="475">
    <property type="disease" value="Joubert syndrome"/>
</dbReference>
<dbReference type="Orphanet" id="564">
    <property type="disease" value="Meckel syndrome"/>
</dbReference>
<dbReference type="PharmGKB" id="PA162377328"/>
<dbReference type="VEuPathDB" id="HostDB:ENSG00000108641"/>
<dbReference type="eggNOG" id="KOG4027">
    <property type="taxonomic scope" value="Eukaryota"/>
</dbReference>
<dbReference type="GeneTree" id="ENSGT00940000160079"/>
<dbReference type="InParanoid" id="Q9UPM9"/>
<dbReference type="OMA" id="NMPIEVT"/>
<dbReference type="OrthoDB" id="431939at2759"/>
<dbReference type="PAN-GO" id="Q9UPM9">
    <property type="GO annotations" value="2 GO annotations based on evolutionary models"/>
</dbReference>
<dbReference type="PhylomeDB" id="Q9UPM9"/>
<dbReference type="TreeFam" id="TF314883"/>
<dbReference type="PathwayCommons" id="Q9UPM9"/>
<dbReference type="Reactome" id="R-HSA-5620912">
    <property type="pathway name" value="Anchoring of the basal body to the plasma membrane"/>
</dbReference>
<dbReference type="SignaLink" id="Q9UPM9"/>
<dbReference type="BioGRID-ORCS" id="27077">
    <property type="hits" value="10 hits in 1161 CRISPR screens"/>
</dbReference>
<dbReference type="GenomeRNAi" id="27077"/>
<dbReference type="Pharos" id="Q9UPM9">
    <property type="development level" value="Tbio"/>
</dbReference>
<dbReference type="PRO" id="PR:Q9UPM9"/>
<dbReference type="Proteomes" id="UP000005640">
    <property type="component" value="Chromosome 17"/>
</dbReference>
<dbReference type="RNAct" id="Q9UPM9">
    <property type="molecule type" value="protein"/>
</dbReference>
<dbReference type="Bgee" id="ENSG00000108641">
    <property type="expression patterns" value="Expressed in right uterine tube and 145 other cell types or tissues"/>
</dbReference>
<dbReference type="ExpressionAtlas" id="Q9UPM9">
    <property type="expression patterns" value="baseline and differential"/>
</dbReference>
<dbReference type="GO" id="GO:0005813">
    <property type="term" value="C:centrosome"/>
    <property type="evidence" value="ECO:0000314"/>
    <property type="project" value="UniProtKB"/>
</dbReference>
<dbReference type="GO" id="GO:0036064">
    <property type="term" value="C:ciliary basal body"/>
    <property type="evidence" value="ECO:0000314"/>
    <property type="project" value="UniProtKB"/>
</dbReference>
<dbReference type="GO" id="GO:0035869">
    <property type="term" value="C:ciliary transition zone"/>
    <property type="evidence" value="ECO:0000250"/>
    <property type="project" value="UniProtKB"/>
</dbReference>
<dbReference type="GO" id="GO:0005829">
    <property type="term" value="C:cytosol"/>
    <property type="evidence" value="ECO:0000304"/>
    <property type="project" value="Reactome"/>
</dbReference>
<dbReference type="GO" id="GO:0016020">
    <property type="term" value="C:membrane"/>
    <property type="evidence" value="ECO:0007669"/>
    <property type="project" value="Ensembl"/>
</dbReference>
<dbReference type="GO" id="GO:0036038">
    <property type="term" value="C:MKS complex"/>
    <property type="evidence" value="ECO:0000250"/>
    <property type="project" value="UniProtKB"/>
</dbReference>
<dbReference type="GO" id="GO:0008158">
    <property type="term" value="F:hedgehog receptor activity"/>
    <property type="evidence" value="ECO:0000250"/>
    <property type="project" value="UniProtKB"/>
</dbReference>
<dbReference type="GO" id="GO:0043010">
    <property type="term" value="P:camera-type eye development"/>
    <property type="evidence" value="ECO:0007669"/>
    <property type="project" value="Ensembl"/>
</dbReference>
<dbReference type="GO" id="GO:0060271">
    <property type="term" value="P:cilium assembly"/>
    <property type="evidence" value="ECO:0000250"/>
    <property type="project" value="UniProtKB"/>
</dbReference>
<dbReference type="GO" id="GO:0042733">
    <property type="term" value="P:embryonic digit morphogenesis"/>
    <property type="evidence" value="ECO:0007669"/>
    <property type="project" value="Ensembl"/>
</dbReference>
<dbReference type="GO" id="GO:0001701">
    <property type="term" value="P:in utero embryonic development"/>
    <property type="evidence" value="ECO:0007669"/>
    <property type="project" value="Ensembl"/>
</dbReference>
<dbReference type="GO" id="GO:0060563">
    <property type="term" value="P:neuroepithelial cell differentiation"/>
    <property type="evidence" value="ECO:0007669"/>
    <property type="project" value="Ensembl"/>
</dbReference>
<dbReference type="GO" id="GO:0032880">
    <property type="term" value="P:regulation of protein localization"/>
    <property type="evidence" value="ECO:0007669"/>
    <property type="project" value="Ensembl"/>
</dbReference>
<dbReference type="GO" id="GO:0007224">
    <property type="term" value="P:smoothened signaling pathway"/>
    <property type="evidence" value="ECO:0000250"/>
    <property type="project" value="UniProtKB"/>
</dbReference>
<dbReference type="GO" id="GO:0001944">
    <property type="term" value="P:vasculature development"/>
    <property type="evidence" value="ECO:0007669"/>
    <property type="project" value="Ensembl"/>
</dbReference>
<dbReference type="InterPro" id="IPR010796">
    <property type="entry name" value="C2_B9-type_dom"/>
</dbReference>
<dbReference type="PANTHER" id="PTHR12968">
    <property type="entry name" value="B9 DOMAIN-CONTAINING"/>
    <property type="match status" value="1"/>
</dbReference>
<dbReference type="PANTHER" id="PTHR12968:SF1">
    <property type="entry name" value="B9 DOMAIN-CONTAINING PROTEIN 1"/>
    <property type="match status" value="1"/>
</dbReference>
<dbReference type="Pfam" id="PF07162">
    <property type="entry name" value="B9-C2"/>
    <property type="match status" value="1"/>
</dbReference>
<dbReference type="PROSITE" id="PS51381">
    <property type="entry name" value="C2_B9"/>
    <property type="match status" value="1"/>
</dbReference>
<keyword id="KW-0025">Alternative splicing</keyword>
<keyword id="KW-0966">Cell projection</keyword>
<keyword id="KW-1186">Ciliopathy</keyword>
<keyword id="KW-0970">Cilium biogenesis/degradation</keyword>
<keyword id="KW-0963">Cytoplasm</keyword>
<keyword id="KW-0206">Cytoskeleton</keyword>
<keyword id="KW-0225">Disease variant</keyword>
<keyword id="KW-0979">Joubert syndrome</keyword>
<keyword id="KW-0981">Meckel syndrome</keyword>
<keyword id="KW-1267">Proteomics identification</keyword>
<keyword id="KW-1185">Reference proteome</keyword>
<accession>Q9UPM9</accession>
<accession>Q9BU22</accession>
<reference key="1">
    <citation type="submission" date="1999-07" db="EMBL/GenBank/DDBJ databases">
        <title>Human homologue for B9.</title>
        <authorList>
            <person name="Miyashita H."/>
            <person name="Sato Y."/>
        </authorList>
    </citation>
    <scope>NUCLEOTIDE SEQUENCE [MRNA] (ISOFORM 1)</scope>
</reference>
<reference key="2">
    <citation type="journal article" date="2004" name="Genome Res.">
        <title>The status, quality, and expansion of the NIH full-length cDNA project: the Mammalian Gene Collection (MGC).</title>
        <authorList>
            <consortium name="The MGC Project Team"/>
        </authorList>
    </citation>
    <scope>NUCLEOTIDE SEQUENCE [LARGE SCALE MRNA] (ISOFORM 2)</scope>
    <source>
        <tissue>Skin</tissue>
    </source>
</reference>
<reference key="3">
    <citation type="journal article" date="2009" name="J. Cell Sci.">
        <title>Functional interactions between the ciliopathy-associated Meckel syndrome 1 (MKS1) protein and two novel MKS1-related (MKSR) proteins.</title>
        <authorList>
            <person name="Bialas N.J."/>
            <person name="Inglis P.N."/>
            <person name="Li C."/>
            <person name="Robinson J.F."/>
            <person name="Parker J.D."/>
            <person name="Healey M.P."/>
            <person name="Davis E.E."/>
            <person name="Inglis C.D."/>
            <person name="Toivonen T."/>
            <person name="Cottell D.C."/>
            <person name="Blacque O.E."/>
            <person name="Quarmby L.M."/>
            <person name="Katsanis N."/>
            <person name="Leroux M.R."/>
        </authorList>
    </citation>
    <scope>SUBCELLULAR LOCATION</scope>
</reference>
<reference key="4">
    <citation type="journal article" date="2011" name="Hum. Mol. Genet.">
        <title>B9D1 is revealed as a novel Meckel syndrome (MKS) gene by targeted exon-enriched next-generation sequencing and deletion analysis.</title>
        <authorList>
            <person name="Hopp K."/>
            <person name="Heyer C.M."/>
            <person name="Hommerding C.J."/>
            <person name="Henke S.A."/>
            <person name="Sundsbak J.L."/>
            <person name="Patel S."/>
            <person name="Patel P."/>
            <person name="Consugar M.B."/>
            <person name="Czarnecki P.G."/>
            <person name="Gliem T.J."/>
            <person name="Torres V.E."/>
            <person name="Rossetti S."/>
            <person name="Harris P.C."/>
        </authorList>
    </citation>
    <scope>INVOLVEMENT IN MKS9</scope>
    <scope>VARIANT TRP-61</scope>
</reference>
<reference key="5">
    <citation type="journal article" date="2014" name="Orphanet J. Rare Dis.">
        <title>Mutations in B9D1 and MKS1 cause mild Joubert syndrome: expanding the genetic overlap with the lethal ciliopathy Meckel syndrome.</title>
        <authorList>
            <person name="Romani M."/>
            <person name="Micalizzi A."/>
            <person name="Kraoua I."/>
            <person name="Dotti M.T."/>
            <person name="Cavallin M."/>
            <person name="Sztriha L."/>
            <person name="Ruta R."/>
            <person name="Mancini F."/>
            <person name="Mazza T."/>
            <person name="Castellana S."/>
            <person name="Hanene B."/>
            <person name="Carluccio M.A."/>
            <person name="Darra F."/>
            <person name="Mate A."/>
            <person name="Zimmermann A."/>
            <person name="Gouider-Khouja N."/>
            <person name="Valente E.M."/>
        </authorList>
    </citation>
    <scope>INVOLVEMENT IN JBTS27</scope>
    <scope>VARIANTS JBTS27 CYS-32; GLN-156 AND VAL-174 DEL</scope>
</reference>
<reference key="6">
    <citation type="journal article" date="2015" name="Am. J. Hum. Genet.">
        <title>Joubert Syndrome in French Canadians and Identification of Mutations in CEP104.</title>
        <authorList>
            <consortium name="Care4Rare Canada Consortium"/>
            <person name="Srour M."/>
            <person name="Hamdan F.F."/>
            <person name="McKnight D."/>
            <person name="Davis E."/>
            <person name="Mandel H."/>
            <person name="Schwartzentruber J."/>
            <person name="Martin B."/>
            <person name="Patry L."/>
            <person name="Nassif C."/>
            <person name="Dionne-Laporte A."/>
            <person name="Ospina L.H."/>
            <person name="Lemyre E."/>
            <person name="Massicotte C."/>
            <person name="Laframboise R."/>
            <person name="Maranda B."/>
            <person name="Labuda D."/>
            <person name="Decarie J.C."/>
            <person name="Rypens F."/>
            <person name="Goldsher D."/>
            <person name="Fallet-Bianco C."/>
            <person name="Soucy J.F."/>
            <person name="Laberge A.M."/>
            <person name="Maftei C."/>
            <person name="Boycott K."/>
            <person name="Brais B."/>
            <person name="Boucher R.M."/>
            <person name="Rouleau G.A."/>
            <person name="Katsanis N."/>
            <person name="Majewski J."/>
            <person name="Elpeleg O."/>
            <person name="Kukolich M.K."/>
            <person name="Shalev S."/>
            <person name="Michaud J.L."/>
        </authorList>
    </citation>
    <scope>VARIANT PRO-51</scope>
</reference>
<proteinExistence type="evidence at protein level"/>
<organism>
    <name type="scientific">Homo sapiens</name>
    <name type="common">Human</name>
    <dbReference type="NCBI Taxonomy" id="9606"/>
    <lineage>
        <taxon>Eukaryota</taxon>
        <taxon>Metazoa</taxon>
        <taxon>Chordata</taxon>
        <taxon>Craniata</taxon>
        <taxon>Vertebrata</taxon>
        <taxon>Euteleostomi</taxon>
        <taxon>Mammalia</taxon>
        <taxon>Eutheria</taxon>
        <taxon>Euarchontoglires</taxon>
        <taxon>Primates</taxon>
        <taxon>Haplorrhini</taxon>
        <taxon>Catarrhini</taxon>
        <taxon>Hominidae</taxon>
        <taxon>Homo</taxon>
    </lineage>
</organism>
<gene>
    <name type="primary">B9D1</name>
    <name type="synonym">MKSR1</name>
</gene>
<sequence>MATASPSVFLLMVNGQVESAQFPEYDDLYCKYCFVYGQDWAPTAGLEEGISQITSKSQDVRQALVWNFPIDVTFKSTNPYGWPQIVLSVYGPDVFGNDVVRGYGAVHVPFSPGRHKRTIPMFVPESTSKLQKFTSWFMGRRPEYTDPKVVAQGEGREVTRVRSQGFVTLLFNVVTKDMRKLGYDTGPSDTQGVLGPSPPQSFPQ</sequence>
<comment type="function">
    <text evidence="1">Component of the tectonic-like complex, a complex localized at the transition zone of primary cilia and acting as a barrier that prevents diffusion of transmembrane proteins between the cilia and plasma membranes. Required for ciliogenesis and sonic hedgehog/SHH signaling (By similarity).</text>
</comment>
<comment type="subunit">
    <text evidence="1">Part of the tectonic-like complex (also named B9 complex).</text>
</comment>
<comment type="interaction">
    <interactant intactId="EBI-372535">
        <id>Q9UPM9</id>
    </interactant>
    <interactant intactId="EBI-6958971">
        <id>Q9BPU9</id>
        <label>B9D2</label>
    </interactant>
    <organismsDiffer>false</organismsDiffer>
    <experiments>8</experiments>
</comment>
<comment type="subcellular location">
    <subcellularLocation>
        <location evidence="4">Cytoplasm</location>
        <location evidence="4">Cytoskeleton</location>
        <location evidence="4">Cilium basal body</location>
    </subcellularLocation>
    <subcellularLocation>
        <location evidence="4">Cytoplasm</location>
        <location evidence="4">Cytoskeleton</location>
        <location evidence="4">Cilium axoneme</location>
    </subcellularLocation>
    <text evidence="1">Localizes at the transition zone, a region between the basal body and the ciliary axoneme.</text>
</comment>
<comment type="alternative products">
    <event type="alternative splicing"/>
    <isoform>
        <id>Q9UPM9-1</id>
        <name>1</name>
        <sequence type="displayed"/>
    </isoform>
    <isoform>
        <id>Q9UPM9-2</id>
        <name>2</name>
        <sequence type="described" ref="VSP_028770"/>
    </isoform>
</comment>
<comment type="disease" evidence="5">
    <disease id="DI-03221">
        <name>Meckel syndrome 9</name>
        <acronym>MKS9</acronym>
        <description>A disorder characterized by a combination of renal cysts and variably associated features including developmental anomalies of the central nervous system (typically encephalocele), hepatic ductal dysplasia and cysts, and polydactyly.</description>
        <dbReference type="MIM" id="614209"/>
    </disease>
    <text>The disease is caused by variants affecting the gene represented in this entry.</text>
</comment>
<comment type="disease" evidence="6">
    <disease id="DI-04819">
        <name>Joubert syndrome 27</name>
        <acronym>JBTS27</acronym>
        <description>A form of Joubert syndrome, a disorder presenting with cerebellar ataxia, oculomotor apraxia, hypotonia, neonatal breathing abnormalities and psychomotor delay. Neuroradiologically, it is characterized by cerebellar vermian hypoplasia/aplasia, thickened and reoriented superior cerebellar peduncles, and an abnormally large interpeduncular fossa, giving the appearance of a molar tooth on transaxial slices (molar tooth sign). Additional variable features include retinal dystrophy, renal disease, liver fibrosis, and polydactyly. JBTS27 inheritance is autosomal recessive.</description>
        <dbReference type="MIM" id="617120"/>
    </disease>
    <text>The disease is caused by variants affecting the gene represented in this entry.</text>
</comment>
<comment type="similarity">
    <text evidence="9">Belongs to the B9D family.</text>
</comment>